<reference key="1">
    <citation type="journal article" date="1994" name="Eur. J. Biochem.">
        <title>A family of hexosephosphate mutases in Saccharomyces cerevisiae.</title>
        <authorList>
            <person name="Boles E."/>
            <person name="Liebetrau W."/>
            <person name="Hofmann M."/>
            <person name="Zimmermann F.K."/>
        </authorList>
    </citation>
    <scope>NUCLEOTIDE SEQUENCE [GENOMIC DNA]</scope>
</reference>
<reference key="2">
    <citation type="journal article" date="1994" name="Nature">
        <title>Complete DNA sequence of yeast chromosome XI.</title>
        <authorList>
            <person name="Dujon B."/>
            <person name="Alexandraki D."/>
            <person name="Andre B."/>
            <person name="Ansorge W."/>
            <person name="Baladron V."/>
            <person name="Ballesta J.P.G."/>
            <person name="Banrevi A."/>
            <person name="Bolle P.-A."/>
            <person name="Bolotin-Fukuhara M."/>
            <person name="Bossier P."/>
            <person name="Bou G."/>
            <person name="Boyer J."/>
            <person name="Buitrago M.J."/>
            <person name="Cheret G."/>
            <person name="Colleaux L."/>
            <person name="Daignan-Fornier B."/>
            <person name="del Rey F."/>
            <person name="Dion C."/>
            <person name="Domdey H."/>
            <person name="Duesterhoeft A."/>
            <person name="Duesterhus S."/>
            <person name="Entian K.-D."/>
            <person name="Erfle H."/>
            <person name="Esteban P.F."/>
            <person name="Feldmann H."/>
            <person name="Fernandes L."/>
            <person name="Fobo G.M."/>
            <person name="Fritz C."/>
            <person name="Fukuhara H."/>
            <person name="Gabel C."/>
            <person name="Gaillon L."/>
            <person name="Garcia-Cantalejo J.M."/>
            <person name="Garcia-Ramirez J.J."/>
            <person name="Gent M.E."/>
            <person name="Ghazvini M."/>
            <person name="Goffeau A."/>
            <person name="Gonzalez A."/>
            <person name="Grothues D."/>
            <person name="Guerreiro P."/>
            <person name="Hegemann J.H."/>
            <person name="Hewitt N."/>
            <person name="Hilger F."/>
            <person name="Hollenberg C.P."/>
            <person name="Horaitis O."/>
            <person name="Indge K.J."/>
            <person name="Jacquier A."/>
            <person name="James C.M."/>
            <person name="Jauniaux J.-C."/>
            <person name="Jimenez A."/>
            <person name="Keuchel H."/>
            <person name="Kirchrath L."/>
            <person name="Kleine K."/>
            <person name="Koetter P."/>
            <person name="Legrain P."/>
            <person name="Liebl S."/>
            <person name="Louis E.J."/>
            <person name="Maia e Silva A."/>
            <person name="Marck C."/>
            <person name="Monnier A.-L."/>
            <person name="Moestl D."/>
            <person name="Mueller S."/>
            <person name="Obermaier B."/>
            <person name="Oliver S.G."/>
            <person name="Pallier C."/>
            <person name="Pascolo S."/>
            <person name="Pfeiffer F."/>
            <person name="Philippsen P."/>
            <person name="Planta R.J."/>
            <person name="Pohl F.M."/>
            <person name="Pohl T.M."/>
            <person name="Poehlmann R."/>
            <person name="Portetelle D."/>
            <person name="Purnelle B."/>
            <person name="Puzos V."/>
            <person name="Ramezani Rad M."/>
            <person name="Rasmussen S.W."/>
            <person name="Remacha M.A."/>
            <person name="Revuelta J.L."/>
            <person name="Richard G.-F."/>
            <person name="Rieger M."/>
            <person name="Rodrigues-Pousada C."/>
            <person name="Rose M."/>
            <person name="Rupp T."/>
            <person name="Santos M.A."/>
            <person name="Schwager C."/>
            <person name="Sensen C."/>
            <person name="Skala J."/>
            <person name="Soares H."/>
            <person name="Sor F."/>
            <person name="Stegemann J."/>
            <person name="Tettelin H."/>
            <person name="Thierry A."/>
            <person name="Tzermia M."/>
            <person name="Urrestarazu L.A."/>
            <person name="van Dyck L."/>
            <person name="van Vliet-Reedijk J.C."/>
            <person name="Valens M."/>
            <person name="Vandenbol M."/>
            <person name="Vilela C."/>
            <person name="Vissers S."/>
            <person name="von Wettstein D."/>
            <person name="Voss H."/>
            <person name="Wiemann S."/>
            <person name="Xu G."/>
            <person name="Zimmermann J."/>
            <person name="Haasemann M."/>
            <person name="Becker I."/>
            <person name="Mewes H.-W."/>
        </authorList>
    </citation>
    <scope>NUCLEOTIDE SEQUENCE [LARGE SCALE GENOMIC DNA]</scope>
    <source>
        <strain>ATCC 204508 / S288c</strain>
    </source>
</reference>
<reference key="3">
    <citation type="journal article" date="2014" name="G3 (Bethesda)">
        <title>The reference genome sequence of Saccharomyces cerevisiae: Then and now.</title>
        <authorList>
            <person name="Engel S.R."/>
            <person name="Dietrich F.S."/>
            <person name="Fisk D.G."/>
            <person name="Binkley G."/>
            <person name="Balakrishnan R."/>
            <person name="Costanzo M.C."/>
            <person name="Dwight S.S."/>
            <person name="Hitz B.C."/>
            <person name="Karra K."/>
            <person name="Nash R.S."/>
            <person name="Weng S."/>
            <person name="Wong E.D."/>
            <person name="Lloyd P."/>
            <person name="Skrzypek M.S."/>
            <person name="Miyasato S.R."/>
            <person name="Simison M."/>
            <person name="Cherry J.M."/>
        </authorList>
    </citation>
    <scope>GENOME REANNOTATION</scope>
    <source>
        <strain>ATCC 204508 / S288c</strain>
    </source>
</reference>
<reference key="4">
    <citation type="journal article" date="1964" name="Biochim. Biophys. Acta">
        <title>The effect of mutation of two forms of phosphoglucomutase in Saccharomyces.</title>
        <authorList>
            <person name="Tsoi A."/>
            <person name="Douglas H.C."/>
        </authorList>
    </citation>
    <scope>FUNCTION</scope>
    <source>
        <strain>8050B</strain>
    </source>
</reference>
<reference key="5">
    <citation type="journal article" date="1967" name="Proc. Natl. Acad. Sci. U.S.A.">
        <title>Phosphoglucomutase. V. Multiple forms of phosphoglucomutase.</title>
        <authorList>
            <person name="Joshi J.G."/>
            <person name="Hooper J."/>
            <person name="Kuwaki T."/>
            <person name="Sakurada T."/>
            <person name="Swanson J.R."/>
            <person name="Handler P."/>
        </authorList>
    </citation>
    <scope>FUNCTION</scope>
</reference>
<reference key="6">
    <citation type="journal article" date="1969" name="J. Bacteriol.">
        <title>Genetic control of phosphoglucomutase variants in Saccharomyces cerevisiae.</title>
        <authorList>
            <person name="Bevan P."/>
            <person name="Douglas H.C."/>
        </authorList>
    </citation>
    <scope>FUNCTION</scope>
</reference>
<reference key="7">
    <citation type="journal article" date="2003" name="Nature">
        <title>Global analysis of protein localization in budding yeast.</title>
        <authorList>
            <person name="Huh W.-K."/>
            <person name="Falvo J.V."/>
            <person name="Gerke L.C."/>
            <person name="Carroll A.S."/>
            <person name="Howson R.W."/>
            <person name="Weissman J.S."/>
            <person name="O'Shea E.K."/>
        </authorList>
    </citation>
    <scope>SUBCELLULAR LOCATION [LARGE SCALE ANALYSIS]</scope>
</reference>
<reference key="8">
    <citation type="journal article" date="2003" name="Nature">
        <title>Global analysis of protein expression in yeast.</title>
        <authorList>
            <person name="Ghaemmaghami S."/>
            <person name="Huh W.-K."/>
            <person name="Bower K."/>
            <person name="Howson R.W."/>
            <person name="Belle A."/>
            <person name="Dephoure N."/>
            <person name="O'Shea E.K."/>
            <person name="Weissman J.S."/>
        </authorList>
    </citation>
    <scope>LEVEL OF PROTEIN EXPRESSION [LARGE SCALE ANALYSIS]</scope>
</reference>
<reference key="9">
    <citation type="journal article" date="2007" name="J. Proteome Res.">
        <title>Large-scale phosphorylation analysis of alpha-factor-arrested Saccharomyces cerevisiae.</title>
        <authorList>
            <person name="Li X."/>
            <person name="Gerber S.A."/>
            <person name="Rudner A.D."/>
            <person name="Beausoleil S.A."/>
            <person name="Haas W."/>
            <person name="Villen J."/>
            <person name="Elias J.E."/>
            <person name="Gygi S.P."/>
        </authorList>
    </citation>
    <scope>PHOSPHORYLATION [LARGE SCALE ANALYSIS] AT SER-120</scope>
    <scope>IDENTIFICATION BY MASS SPECTROMETRY [LARGE SCALE ANALYSIS]</scope>
    <source>
        <strain>ADR376</strain>
    </source>
</reference>
<reference key="10">
    <citation type="journal article" date="2008" name="Mol. Cell. Proteomics">
        <title>A multidimensional chromatography technology for in-depth phosphoproteome analysis.</title>
        <authorList>
            <person name="Albuquerque C.P."/>
            <person name="Smolka M.B."/>
            <person name="Payne S.H."/>
            <person name="Bafna V."/>
            <person name="Eng J."/>
            <person name="Zhou H."/>
        </authorList>
    </citation>
    <scope>PHOSPHORYLATION [LARGE SCALE ANALYSIS] AT SER-120</scope>
    <scope>IDENTIFICATION BY MASS SPECTROMETRY [LARGE SCALE ANALYSIS]</scope>
</reference>
<reference key="11">
    <citation type="journal article" date="2009" name="Science">
        <title>Global analysis of Cdk1 substrate phosphorylation sites provides insights into evolution.</title>
        <authorList>
            <person name="Holt L.J."/>
            <person name="Tuch B.B."/>
            <person name="Villen J."/>
            <person name="Johnson A.D."/>
            <person name="Gygi S.P."/>
            <person name="Morgan D.O."/>
        </authorList>
    </citation>
    <scope>PHOSPHORYLATION [LARGE SCALE ANALYSIS] AT SER-120</scope>
    <scope>IDENTIFICATION BY MASS SPECTROMETRY [LARGE SCALE ANALYSIS]</scope>
</reference>
<reference key="12">
    <citation type="journal article" date="2012" name="FEBS Lett.">
        <title>The PGM3 gene encodes the major phosphoribomutase in the yeast Saccharomyces cerevisiae.</title>
        <authorList>
            <person name="Walther T."/>
            <person name="Baylac A."/>
            <person name="Alkim C."/>
            <person name="Vax A."/>
            <person name="Cordier H."/>
            <person name="Francois J.M."/>
        </authorList>
    </citation>
    <scope>FUNCTION</scope>
    <scope>CATALYTIC ACTIVITY</scope>
    <scope>BIOPHYSICOCHEMICAL PROPERTIES</scope>
</reference>
<reference key="13">
    <citation type="journal article" date="2012" name="Proc. Natl. Acad. Sci. U.S.A.">
        <title>N-terminal acetylome analyses and functional insights of the N-terminal acetyltransferase NatB.</title>
        <authorList>
            <person name="Van Damme P."/>
            <person name="Lasa M."/>
            <person name="Polevoda B."/>
            <person name="Gazquez C."/>
            <person name="Elosegui-Artola A."/>
            <person name="Kim D.S."/>
            <person name="De Juan-Pardo E."/>
            <person name="Demeyer K."/>
            <person name="Hole K."/>
            <person name="Larrea E."/>
            <person name="Timmerman E."/>
            <person name="Prieto J."/>
            <person name="Arnesen T."/>
            <person name="Sherman F."/>
            <person name="Gevaert K."/>
            <person name="Aldabe R."/>
        </authorList>
    </citation>
    <scope>ACETYLATION [LARGE SCALE ANALYSIS] AT SER-2</scope>
    <scope>CLEAVAGE OF INITIATOR METHIONINE [LARGE SCALE ANALYSIS]</scope>
    <scope>IDENTIFICATION BY MASS SPECTROMETRY [LARGE SCALE ANALYSIS]</scope>
</reference>
<protein>
    <recommendedName>
        <fullName evidence="9">Phosphoglucomutase 1</fullName>
        <shortName evidence="9">PGM 1</shortName>
        <ecNumber evidence="6">5.4.2.2</ecNumber>
    </recommendedName>
    <alternativeName>
        <fullName>Glucose phosphomutase 1</fullName>
    </alternativeName>
</protein>
<feature type="initiator methionine" description="Removed" evidence="16">
    <location>
        <position position="1"/>
    </location>
</feature>
<feature type="chain" id="PRO_0000147796" description="Phosphoglucomutase 1">
    <location>
        <begin position="2"/>
        <end position="570"/>
    </location>
</feature>
<feature type="active site" description="Phosphoserine intermediate" evidence="1">
    <location>
        <position position="120"/>
    </location>
</feature>
<feature type="binding site" evidence="1">
    <location>
        <position position="24"/>
    </location>
    <ligand>
        <name>alpha-D-glucose 1,6-bisphosphate</name>
        <dbReference type="ChEBI" id="CHEBI:58392"/>
    </ligand>
</feature>
<feature type="binding site" evidence="1">
    <location>
        <position position="120"/>
    </location>
    <ligand>
        <name>alpha-D-glucose 1,6-bisphosphate</name>
        <dbReference type="ChEBI" id="CHEBI:58392"/>
    </ligand>
</feature>
<feature type="binding site" description="via phosphate group" evidence="1">
    <location>
        <position position="120"/>
    </location>
    <ligand>
        <name>Mg(2+)</name>
        <dbReference type="ChEBI" id="CHEBI:18420"/>
    </ligand>
</feature>
<feature type="binding site" evidence="1">
    <location>
        <position position="291"/>
    </location>
    <ligand>
        <name>Mg(2+)</name>
        <dbReference type="ChEBI" id="CHEBI:18420"/>
    </ligand>
</feature>
<feature type="binding site" evidence="1">
    <location>
        <position position="293"/>
    </location>
    <ligand>
        <name>Mg(2+)</name>
        <dbReference type="ChEBI" id="CHEBI:18420"/>
    </ligand>
</feature>
<feature type="binding site" evidence="1">
    <location>
        <position position="295"/>
    </location>
    <ligand>
        <name>alpha-D-glucose 1,6-bisphosphate</name>
        <dbReference type="ChEBI" id="CHEBI:58392"/>
    </ligand>
</feature>
<feature type="binding site" evidence="1">
    <location>
        <position position="295"/>
    </location>
    <ligand>
        <name>Mg(2+)</name>
        <dbReference type="ChEBI" id="CHEBI:18420"/>
    </ligand>
</feature>
<feature type="binding site" evidence="1">
    <location>
        <position position="296"/>
    </location>
    <ligand>
        <name>alpha-D-glucose 1,6-bisphosphate</name>
        <dbReference type="ChEBI" id="CHEBI:58392"/>
    </ligand>
</feature>
<feature type="binding site" evidence="1">
    <location>
        <position position="360"/>
    </location>
    <ligand>
        <name>alpha-D-glucose 1,6-bisphosphate</name>
        <dbReference type="ChEBI" id="CHEBI:58392"/>
    </ligand>
</feature>
<feature type="binding site" evidence="1">
    <location>
        <position position="379"/>
    </location>
    <ligand>
        <name>alpha-D-glucose 1,6-bisphosphate</name>
        <dbReference type="ChEBI" id="CHEBI:58392"/>
    </ligand>
</feature>
<feature type="binding site" evidence="1">
    <location>
        <position position="381"/>
    </location>
    <ligand>
        <name>alpha-D-glucose 1,6-bisphosphate</name>
        <dbReference type="ChEBI" id="CHEBI:58392"/>
    </ligand>
</feature>
<feature type="binding site" evidence="1">
    <location>
        <position position="392"/>
    </location>
    <ligand>
        <name>alpha-D-glucose 1,6-bisphosphate</name>
        <dbReference type="ChEBI" id="CHEBI:58392"/>
    </ligand>
</feature>
<feature type="modified residue" description="N-acetylserine" evidence="16">
    <location>
        <position position="2"/>
    </location>
</feature>
<feature type="modified residue" description="Phosphoserine" evidence="13 14 15">
    <location>
        <position position="120"/>
    </location>
</feature>
<accession>P33401</accession>
<accession>D6VX68</accession>
<sequence length="570" mass="63112">MSLLIDSVPTVAYKDQKPGTSGLRKKTKVFMDEPHYTENFIQATMQSIPNGSEGTTLVVGGDGRFYNDVIMNKIAAVGAANGVRKLVIGQGGLLSTPAASHIIRTYEEKCTGGGIILTASHNPGGPENDLGIKYNLPNGGPAPESVTNAIWEASKKLTHYKIIKNFPKLNLNKLGKNQKYGPLLVDIIDPAKAYVQFLKEIFDFDLIKSFLAKQRKDKGWKLLFDSLNGITGPYGKAIFVDEFGLPAEEVLQNWHPLPDFGGLHPDPNLTYARTLVDRVDREKIAFGAASDGDGDRNMIYGYGPAFVSPGDSVAIIAEYAPEIPYFAKQGIYGLARSFPTSSAIDRVAAKKGLRCYEVPTGWKFFCALFDAKKLSICGEESFGTGSNHIREKDGLWAIIAWLNILAIYHRRNPEKEASIKTIQDEFWNEYGRTFFTRYDYEHIECEQAEKVVALLSEFVSRPNVCGSHFPADESLTVIDCGDFSYRDLDGSISENQGLFVKFSNGTKFVLRLSGTGSSGATIRLYVEKYTDKKENYGQTADVFLKPVINSIVKFLRFKEILGTDEPTVRT</sequence>
<dbReference type="EC" id="5.4.2.2" evidence="6"/>
<dbReference type="EMBL" id="X72016">
    <property type="protein sequence ID" value="CAA50895.1"/>
    <property type="molecule type" value="Genomic_DNA"/>
</dbReference>
<dbReference type="EMBL" id="Z28127">
    <property type="protein sequence ID" value="CAA81968.1"/>
    <property type="molecule type" value="Genomic_DNA"/>
</dbReference>
<dbReference type="EMBL" id="BK006944">
    <property type="protein sequence ID" value="DAA09034.1"/>
    <property type="molecule type" value="Genomic_DNA"/>
</dbReference>
<dbReference type="PIR" id="S41199">
    <property type="entry name" value="S41199"/>
</dbReference>
<dbReference type="RefSeq" id="NP_012795.1">
    <property type="nucleotide sequence ID" value="NM_001179693.1"/>
</dbReference>
<dbReference type="SMR" id="P33401"/>
<dbReference type="BioGRID" id="34009">
    <property type="interactions" value="189"/>
</dbReference>
<dbReference type="DIP" id="DIP-4098N"/>
<dbReference type="FunCoup" id="P33401">
    <property type="interactions" value="574"/>
</dbReference>
<dbReference type="IntAct" id="P33401">
    <property type="interactions" value="10"/>
</dbReference>
<dbReference type="MINT" id="P33401"/>
<dbReference type="STRING" id="4932.YKL127W"/>
<dbReference type="iPTMnet" id="P33401"/>
<dbReference type="PaxDb" id="4932-YKL127W"/>
<dbReference type="PeptideAtlas" id="P33401"/>
<dbReference type="EnsemblFungi" id="YKL127W_mRNA">
    <property type="protein sequence ID" value="YKL127W"/>
    <property type="gene ID" value="YKL127W"/>
</dbReference>
<dbReference type="GeneID" id="853732"/>
<dbReference type="KEGG" id="sce:YKL127W"/>
<dbReference type="AGR" id="SGD:S000001610"/>
<dbReference type="SGD" id="S000001610">
    <property type="gene designation" value="PGM1"/>
</dbReference>
<dbReference type="VEuPathDB" id="FungiDB:YKL127W"/>
<dbReference type="eggNOG" id="KOG0625">
    <property type="taxonomic scope" value="Eukaryota"/>
</dbReference>
<dbReference type="GeneTree" id="ENSGT00940000173602"/>
<dbReference type="HOGENOM" id="CLU_009330_0_1_1"/>
<dbReference type="InParanoid" id="P33401"/>
<dbReference type="OMA" id="YIPDYAG"/>
<dbReference type="OrthoDB" id="2291at2759"/>
<dbReference type="BioCyc" id="MetaCyc:YKL127W-MONOMER"/>
<dbReference type="BioCyc" id="YEAST:YKL127W-MONOMER"/>
<dbReference type="Reactome" id="R-SCE-3322077">
    <property type="pathway name" value="Glycogen synthesis"/>
</dbReference>
<dbReference type="Reactome" id="R-SCE-6798695">
    <property type="pathway name" value="Neutrophil degranulation"/>
</dbReference>
<dbReference type="Reactome" id="R-SCE-70221">
    <property type="pathway name" value="Glycogen breakdown (glycogenolysis)"/>
</dbReference>
<dbReference type="Reactome" id="R-SCE-70370">
    <property type="pathway name" value="Galactose catabolism"/>
</dbReference>
<dbReference type="SABIO-RK" id="P33401"/>
<dbReference type="BioGRID-ORCS" id="853732">
    <property type="hits" value="2 hits in 10 CRISPR screens"/>
</dbReference>
<dbReference type="PRO" id="PR:P33401"/>
<dbReference type="Proteomes" id="UP000002311">
    <property type="component" value="Chromosome XI"/>
</dbReference>
<dbReference type="RNAct" id="P33401">
    <property type="molecule type" value="protein"/>
</dbReference>
<dbReference type="GO" id="GO:0005737">
    <property type="term" value="C:cytoplasm"/>
    <property type="evidence" value="ECO:0000314"/>
    <property type="project" value="SGD"/>
</dbReference>
<dbReference type="GO" id="GO:0005829">
    <property type="term" value="C:cytosol"/>
    <property type="evidence" value="ECO:0000318"/>
    <property type="project" value="GO_Central"/>
</dbReference>
<dbReference type="GO" id="GO:0000287">
    <property type="term" value="F:magnesium ion binding"/>
    <property type="evidence" value="ECO:0007669"/>
    <property type="project" value="InterPro"/>
</dbReference>
<dbReference type="GO" id="GO:0004614">
    <property type="term" value="F:phosphoglucomutase activity"/>
    <property type="evidence" value="ECO:0000316"/>
    <property type="project" value="SGD"/>
</dbReference>
<dbReference type="GO" id="GO:0005975">
    <property type="term" value="P:carbohydrate metabolic process"/>
    <property type="evidence" value="ECO:0000318"/>
    <property type="project" value="GO_Central"/>
</dbReference>
<dbReference type="GO" id="GO:0019388">
    <property type="term" value="P:galactose catabolic process"/>
    <property type="evidence" value="ECO:0000316"/>
    <property type="project" value="SGD"/>
</dbReference>
<dbReference type="GO" id="GO:0019255">
    <property type="term" value="P:glucose 1-phosphate metabolic process"/>
    <property type="evidence" value="ECO:0000316"/>
    <property type="project" value="SGD"/>
</dbReference>
<dbReference type="GO" id="GO:0051156">
    <property type="term" value="P:glucose 6-phosphate metabolic process"/>
    <property type="evidence" value="ECO:0000316"/>
    <property type="project" value="SGD"/>
</dbReference>
<dbReference type="GO" id="GO:0006006">
    <property type="term" value="P:glucose metabolic process"/>
    <property type="evidence" value="ECO:0007669"/>
    <property type="project" value="UniProtKB-KW"/>
</dbReference>
<dbReference type="GO" id="GO:0005978">
    <property type="term" value="P:glycogen biosynthetic process"/>
    <property type="evidence" value="ECO:0000316"/>
    <property type="project" value="SGD"/>
</dbReference>
<dbReference type="GO" id="GO:0005992">
    <property type="term" value="P:trehalose biosynthetic process"/>
    <property type="evidence" value="ECO:0000316"/>
    <property type="project" value="SGD"/>
</dbReference>
<dbReference type="GO" id="GO:0006011">
    <property type="term" value="P:UDP-alpha-D-glucose metabolic process"/>
    <property type="evidence" value="ECO:0000316"/>
    <property type="project" value="SGD"/>
</dbReference>
<dbReference type="FunFam" id="3.30.310.50:FF:000002">
    <property type="entry name" value="Phosphoglucomutase 5"/>
    <property type="match status" value="1"/>
</dbReference>
<dbReference type="FunFam" id="3.40.120.10:FF:000004">
    <property type="entry name" value="Phosphoglucomutase 5"/>
    <property type="match status" value="1"/>
</dbReference>
<dbReference type="FunFam" id="3.40.120.10:FF:000005">
    <property type="entry name" value="Phosphoglucomutase 5"/>
    <property type="match status" value="1"/>
</dbReference>
<dbReference type="FunFam" id="3.40.120.10:FF:000006">
    <property type="entry name" value="Phosphoglucomutase PgmA"/>
    <property type="match status" value="1"/>
</dbReference>
<dbReference type="Gene3D" id="3.40.120.10">
    <property type="entry name" value="Alpha-D-Glucose-1,6-Bisphosphate, subunit A, domain 3"/>
    <property type="match status" value="3"/>
</dbReference>
<dbReference type="Gene3D" id="3.30.310.50">
    <property type="entry name" value="Alpha-D-phosphohexomutase, C-terminal domain"/>
    <property type="match status" value="1"/>
</dbReference>
<dbReference type="InterPro" id="IPR005844">
    <property type="entry name" value="A-D-PHexomutase_a/b/a-I"/>
</dbReference>
<dbReference type="InterPro" id="IPR016055">
    <property type="entry name" value="A-D-PHexomutase_a/b/a-I/II/III"/>
</dbReference>
<dbReference type="InterPro" id="IPR005845">
    <property type="entry name" value="A-D-PHexomutase_a/b/a-II"/>
</dbReference>
<dbReference type="InterPro" id="IPR005846">
    <property type="entry name" value="A-D-PHexomutase_a/b/a-III"/>
</dbReference>
<dbReference type="InterPro" id="IPR036900">
    <property type="entry name" value="A-D-PHexomutase_C_sf"/>
</dbReference>
<dbReference type="InterPro" id="IPR016066">
    <property type="entry name" value="A-D-PHexomutase_CS"/>
</dbReference>
<dbReference type="InterPro" id="IPR005841">
    <property type="entry name" value="Alpha-D-phosphohexomutase_SF"/>
</dbReference>
<dbReference type="InterPro" id="IPR045244">
    <property type="entry name" value="PGM"/>
</dbReference>
<dbReference type="NCBIfam" id="NF005737">
    <property type="entry name" value="PRK07564.1-1"/>
    <property type="match status" value="1"/>
</dbReference>
<dbReference type="PANTHER" id="PTHR22573:SF2">
    <property type="entry name" value="PHOSPHOGLUCOMUTASE"/>
    <property type="match status" value="1"/>
</dbReference>
<dbReference type="PANTHER" id="PTHR22573">
    <property type="entry name" value="PHOSPHOHEXOMUTASE FAMILY MEMBER"/>
    <property type="match status" value="1"/>
</dbReference>
<dbReference type="Pfam" id="PF24947">
    <property type="entry name" value="PGM1_C_vert_fung"/>
    <property type="match status" value="1"/>
</dbReference>
<dbReference type="Pfam" id="PF02878">
    <property type="entry name" value="PGM_PMM_I"/>
    <property type="match status" value="1"/>
</dbReference>
<dbReference type="Pfam" id="PF02879">
    <property type="entry name" value="PGM_PMM_II"/>
    <property type="match status" value="1"/>
</dbReference>
<dbReference type="Pfam" id="PF02880">
    <property type="entry name" value="PGM_PMM_III"/>
    <property type="match status" value="1"/>
</dbReference>
<dbReference type="PRINTS" id="PR00509">
    <property type="entry name" value="PGMPMM"/>
</dbReference>
<dbReference type="SUPFAM" id="SSF55957">
    <property type="entry name" value="Phosphoglucomutase, C-terminal domain"/>
    <property type="match status" value="1"/>
</dbReference>
<dbReference type="SUPFAM" id="SSF53738">
    <property type="entry name" value="Phosphoglucomutase, first 3 domains"/>
    <property type="match status" value="3"/>
</dbReference>
<dbReference type="PROSITE" id="PS00710">
    <property type="entry name" value="PGM_PMM"/>
    <property type="match status" value="1"/>
</dbReference>
<keyword id="KW-0007">Acetylation</keyword>
<keyword id="KW-0119">Carbohydrate metabolism</keyword>
<keyword id="KW-0963">Cytoplasm</keyword>
<keyword id="KW-0313">Glucose metabolism</keyword>
<keyword id="KW-0413">Isomerase</keyword>
<keyword id="KW-0460">Magnesium</keyword>
<keyword id="KW-0479">Metal-binding</keyword>
<keyword id="KW-0597">Phosphoprotein</keyword>
<keyword id="KW-1185">Reference proteome</keyword>
<gene>
    <name evidence="9" type="primary">PGM1</name>
    <name evidence="12" type="ordered locus">YKL127W</name>
</gene>
<organism>
    <name type="scientific">Saccharomyces cerevisiae (strain ATCC 204508 / S288c)</name>
    <name type="common">Baker's yeast</name>
    <dbReference type="NCBI Taxonomy" id="559292"/>
    <lineage>
        <taxon>Eukaryota</taxon>
        <taxon>Fungi</taxon>
        <taxon>Dikarya</taxon>
        <taxon>Ascomycota</taxon>
        <taxon>Saccharomycotina</taxon>
        <taxon>Saccharomycetes</taxon>
        <taxon>Saccharomycetales</taxon>
        <taxon>Saccharomycetaceae</taxon>
        <taxon>Saccharomyces</taxon>
    </lineage>
</organism>
<evidence type="ECO:0000250" key="1">
    <source>
        <dbReference type="UniProtKB" id="P00949"/>
    </source>
</evidence>
<evidence type="ECO:0000250" key="2">
    <source>
        <dbReference type="UniProtKB" id="P37012"/>
    </source>
</evidence>
<evidence type="ECO:0000269" key="3">
    <source>
    </source>
</evidence>
<evidence type="ECO:0000269" key="4">
    <source>
    </source>
</evidence>
<evidence type="ECO:0000269" key="5">
    <source>
    </source>
</evidence>
<evidence type="ECO:0000269" key="6">
    <source>
    </source>
</evidence>
<evidence type="ECO:0000269" key="7">
    <source>
    </source>
</evidence>
<evidence type="ECO:0000269" key="8">
    <source>
    </source>
</evidence>
<evidence type="ECO:0000303" key="9">
    <source>
    </source>
</evidence>
<evidence type="ECO:0000305" key="10"/>
<evidence type="ECO:0000305" key="11">
    <source>
    </source>
</evidence>
<evidence type="ECO:0000312" key="12">
    <source>
        <dbReference type="SGD" id="S000001610"/>
    </source>
</evidence>
<evidence type="ECO:0007744" key="13">
    <source>
    </source>
</evidence>
<evidence type="ECO:0007744" key="14">
    <source>
    </source>
</evidence>
<evidence type="ECO:0007744" key="15">
    <source>
    </source>
</evidence>
<evidence type="ECO:0007744" key="16">
    <source>
    </source>
</evidence>
<name>PGM1_YEAST</name>
<comment type="function">
    <text evidence="3 6 7 8 11">Minor phosphoglucomutase isozyme that catalyzes the reversible interconversion of alpha-D-glucose 1-phosphate and alpha-D-glucose 6-phosphate (PubMed:23103740, PubMed:5784209). The mechanism proceeds via the intermediate compound alpha-D-glucose 1,6-bisphosphate (Probable). Constitutes about 10-20% of the phosphoglucomutase activity in the cell (PubMed:14264884, PubMed:5231755). Key enzyme in hexose metabolism. The forward reaction is an essential step in the energy metabolism of galactose since the product of the galactose pathway enzymes in yeast is glucose 1-phosphate. The reverse reaction is an essential step for biosynthesis when carbon sources other than galactose are the energy source because glucose 1-phosphate is the starting point for the synthesis of UDP-glucose, which acts as a precursor for the synthesis of oligosaccharides and trehalose (PubMed:14264884).</text>
</comment>
<comment type="catalytic activity">
    <reaction evidence="6">
        <text>alpha-D-glucose 1-phosphate = alpha-D-glucose 6-phosphate</text>
        <dbReference type="Rhea" id="RHEA:23536"/>
        <dbReference type="ChEBI" id="CHEBI:58225"/>
        <dbReference type="ChEBI" id="CHEBI:58601"/>
        <dbReference type="EC" id="5.4.2.2"/>
    </reaction>
</comment>
<comment type="catalytic activity">
    <reaction evidence="11">
        <text>O-phospho-L-seryl-[protein] + alpha-D-glucose 1-phosphate = alpha-D-glucose 1,6-bisphosphate + L-seryl-[protein]</text>
        <dbReference type="Rhea" id="RHEA:68748"/>
        <dbReference type="Rhea" id="RHEA-COMP:9863"/>
        <dbReference type="Rhea" id="RHEA-COMP:11604"/>
        <dbReference type="ChEBI" id="CHEBI:29999"/>
        <dbReference type="ChEBI" id="CHEBI:58392"/>
        <dbReference type="ChEBI" id="CHEBI:58601"/>
        <dbReference type="ChEBI" id="CHEBI:83421"/>
    </reaction>
</comment>
<comment type="catalytic activity">
    <reaction evidence="11">
        <text>alpha-D-glucose 1,6-bisphosphate + L-seryl-[protein] = O-phospho-L-seryl-[protein] + alpha-D-glucose 6-phosphate</text>
        <dbReference type="Rhea" id="RHEA:68752"/>
        <dbReference type="Rhea" id="RHEA-COMP:9863"/>
        <dbReference type="Rhea" id="RHEA-COMP:11604"/>
        <dbReference type="ChEBI" id="CHEBI:29999"/>
        <dbReference type="ChEBI" id="CHEBI:58225"/>
        <dbReference type="ChEBI" id="CHEBI:58392"/>
        <dbReference type="ChEBI" id="CHEBI:83421"/>
    </reaction>
</comment>
<comment type="cofactor">
    <cofactor evidence="1">
        <name>Mg(2+)</name>
        <dbReference type="ChEBI" id="CHEBI:18420"/>
    </cofactor>
    <text evidence="1">Binds 1 Mg(2+) ion per subunit.</text>
</comment>
<comment type="biophysicochemical properties">
    <kinetics>
        <KM evidence="6">60 uM for alpha-D-glucose 1-phosphate</KM>
        <Vmax evidence="6">0.24 umol/min/mg enzyme for alpha-D-glucose 1-phosphate</Vmax>
        <Vmax evidence="6">0.06 umol/min/mg enzyme for D-ribose 1-phosphate</Vmax>
    </kinetics>
</comment>
<comment type="subunit">
    <text evidence="2">Monomer.</text>
</comment>
<comment type="subcellular location">
    <subcellularLocation>
        <location evidence="4">Cytoplasm</location>
    </subcellularLocation>
</comment>
<comment type="miscellaneous">
    <text evidence="5">Present with 9820 molecules/cell in log phase SD medium.</text>
</comment>
<comment type="similarity">
    <text evidence="10">Belongs to the phosphohexose mutase family.</text>
</comment>
<proteinExistence type="evidence at protein level"/>